<reference key="1">
    <citation type="journal article" date="1992" name="EMBO J.">
        <title>Muscle-specific expression of SRF-related genes in the early embryo of Xenopus laevis.</title>
        <authorList>
            <person name="Chambers A.E."/>
            <person name="Kotecha S."/>
            <person name="Towers N."/>
            <person name="Mohun T.J."/>
        </authorList>
    </citation>
    <scope>NUCLEOTIDE SEQUENCE [MRNA]</scope>
    <source>
        <tissue>Neurula</tissue>
    </source>
</reference>
<reference key="2">
    <citation type="journal article" date="1999" name="EMBO J.">
        <title>MEF-2 function is modified by a novel co-repressor, MITR.</title>
        <authorList>
            <person name="Sparrow D.B."/>
            <person name="Miska E.A."/>
            <person name="Langley E."/>
            <person name="Reynaud-Deonauth S."/>
            <person name="Kotecha S."/>
            <person name="Towers N."/>
            <person name="Spohr G."/>
            <person name="Kouzarides T."/>
            <person name="Mohun T.J."/>
        </authorList>
    </citation>
    <scope>INTERACTION WITH HDAC9</scope>
</reference>
<accession>Q03413</accession>
<keyword id="KW-0010">Activator</keyword>
<keyword id="KW-0238">DNA-binding</keyword>
<keyword id="KW-0539">Nucleus</keyword>
<keyword id="KW-1185">Reference proteome</keyword>
<keyword id="KW-0804">Transcription</keyword>
<keyword id="KW-0805">Transcription regulation</keyword>
<name>MEF2D_XENLA</name>
<sequence length="498" mass="54071">MGRKKIQIQRITDERNRQVTFTKRKFGLMKKAYELSVLCDCEIALIIFNHSNKLFQYASTDMDKVLLKYTEYNEPHESRTNADIIETLRKKGFNGCDSPEPDGDDSIDQSPLMEDKYRKSSEDLDILFKRYGSAVPAPNFAMPVTVPVTNQNALHFSNPGGSLITQSLMTSSLTDPRLLSPPQPSLQRNTVSPGLPQRPASAGAMLGGELNNSNGTCPSPVGNGYISARASPGLLPVSNGNSLGKVIQAKSPPSPNQNSQLGANSRKPDLRVITSQGGKGLMHHLTEEQLEMSVQRLGGVSQATHSLTTPVVSVATPSLLSHHGLPFSAMSTAYNTDYQLTSADLASLSTFSSPGSLSLGNVTAWQHQQQQQQQHNQPQQLIPVSLSNLVSSSHLPHTATLTVNTNPINISIKREPASPNRERSTGTPLSCFSHQSRHEATGRSPVDSLSSNASSFEGNDREDPRGDYTSSLGLLRPSGDTESESQSVKRMRLDAWVT</sequence>
<protein>
    <recommendedName>
        <fullName>Myocyte-specific enhancer factor 2D homolog</fullName>
    </recommendedName>
    <alternativeName>
        <fullName>Serum response factor-like protein 1</fullName>
        <shortName>SL-1</shortName>
    </alternativeName>
</protein>
<proteinExistence type="evidence at protein level"/>
<evidence type="ECO:0000255" key="1"/>
<evidence type="ECO:0000255" key="2">
    <source>
        <dbReference type="PROSITE-ProRule" id="PRU00251"/>
    </source>
</evidence>
<evidence type="ECO:0000256" key="3">
    <source>
        <dbReference type="SAM" id="MobiDB-lite"/>
    </source>
</evidence>
<evidence type="ECO:0000269" key="4">
    <source>
    </source>
</evidence>
<evidence type="ECO:0000305" key="5"/>
<dbReference type="EMBL" id="Z19124">
    <property type="protein sequence ID" value="CAA79531.1"/>
    <property type="molecule type" value="mRNA"/>
</dbReference>
<dbReference type="PIR" id="S28059">
    <property type="entry name" value="S28059"/>
</dbReference>
<dbReference type="RefSeq" id="NP_001095265.1">
    <property type="nucleotide sequence ID" value="NM_001101795.1"/>
</dbReference>
<dbReference type="SMR" id="Q03413"/>
<dbReference type="BioGRID" id="100665">
    <property type="interactions" value="1"/>
</dbReference>
<dbReference type="GeneID" id="399340"/>
<dbReference type="KEGG" id="xla:399340"/>
<dbReference type="AGR" id="Xenbase:XB-GENE-6254040"/>
<dbReference type="CTD" id="399340"/>
<dbReference type="Xenbase" id="XB-GENE-6254040">
    <property type="gene designation" value="mef2d.S"/>
</dbReference>
<dbReference type="OrthoDB" id="1898716at2759"/>
<dbReference type="Proteomes" id="UP000186698">
    <property type="component" value="Chromosome 8S"/>
</dbReference>
<dbReference type="Bgee" id="399340">
    <property type="expression patterns" value="Expressed in muscle tissue and 19 other cell types or tissues"/>
</dbReference>
<dbReference type="GO" id="GO:0005634">
    <property type="term" value="C:nucleus"/>
    <property type="evidence" value="ECO:0007669"/>
    <property type="project" value="UniProtKB-SubCell"/>
</dbReference>
<dbReference type="GO" id="GO:0000981">
    <property type="term" value="F:DNA-binding transcription factor activity, RNA polymerase II-specific"/>
    <property type="evidence" value="ECO:0000318"/>
    <property type="project" value="GO_Central"/>
</dbReference>
<dbReference type="GO" id="GO:0042826">
    <property type="term" value="F:histone deacetylase binding"/>
    <property type="evidence" value="ECO:0000318"/>
    <property type="project" value="GO_Central"/>
</dbReference>
<dbReference type="GO" id="GO:0046983">
    <property type="term" value="F:protein dimerization activity"/>
    <property type="evidence" value="ECO:0007669"/>
    <property type="project" value="InterPro"/>
</dbReference>
<dbReference type="GO" id="GO:0000978">
    <property type="term" value="F:RNA polymerase II cis-regulatory region sequence-specific DNA binding"/>
    <property type="evidence" value="ECO:0000318"/>
    <property type="project" value="GO_Central"/>
</dbReference>
<dbReference type="GO" id="GO:0030154">
    <property type="term" value="P:cell differentiation"/>
    <property type="evidence" value="ECO:0000318"/>
    <property type="project" value="GO_Central"/>
</dbReference>
<dbReference type="GO" id="GO:0007507">
    <property type="term" value="P:heart development"/>
    <property type="evidence" value="ECO:0000318"/>
    <property type="project" value="GO_Central"/>
</dbReference>
<dbReference type="GO" id="GO:0045944">
    <property type="term" value="P:positive regulation of transcription by RNA polymerase II"/>
    <property type="evidence" value="ECO:0000318"/>
    <property type="project" value="GO_Central"/>
</dbReference>
<dbReference type="CDD" id="cd00265">
    <property type="entry name" value="MADS_MEF2_like"/>
    <property type="match status" value="1"/>
</dbReference>
<dbReference type="FunFam" id="3.40.1810.10:FF:000001">
    <property type="entry name" value="Myocyte-specific enhancer factor 2A homolog"/>
    <property type="match status" value="1"/>
</dbReference>
<dbReference type="Gene3D" id="3.40.1810.10">
    <property type="entry name" value="Transcription factor, MADS-box"/>
    <property type="match status" value="1"/>
</dbReference>
<dbReference type="InterPro" id="IPR022102">
    <property type="entry name" value="HJURP_C"/>
</dbReference>
<dbReference type="InterPro" id="IPR033896">
    <property type="entry name" value="MEF2-like_N"/>
</dbReference>
<dbReference type="InterPro" id="IPR002100">
    <property type="entry name" value="TF_MADSbox"/>
</dbReference>
<dbReference type="InterPro" id="IPR036879">
    <property type="entry name" value="TF_MADSbox_sf"/>
</dbReference>
<dbReference type="PANTHER" id="PTHR11945">
    <property type="entry name" value="MADS BOX PROTEIN"/>
    <property type="match status" value="1"/>
</dbReference>
<dbReference type="PANTHER" id="PTHR11945:SF837">
    <property type="entry name" value="MYOCYTE ENHANCER FACTOR 2D"/>
    <property type="match status" value="1"/>
</dbReference>
<dbReference type="Pfam" id="PF12347">
    <property type="entry name" value="HJURP_C"/>
    <property type="match status" value="1"/>
</dbReference>
<dbReference type="Pfam" id="PF00319">
    <property type="entry name" value="SRF-TF"/>
    <property type="match status" value="1"/>
</dbReference>
<dbReference type="PRINTS" id="PR00404">
    <property type="entry name" value="MADSDOMAIN"/>
</dbReference>
<dbReference type="SMART" id="SM00432">
    <property type="entry name" value="MADS"/>
    <property type="match status" value="1"/>
</dbReference>
<dbReference type="SUPFAM" id="SSF55455">
    <property type="entry name" value="SRF-like"/>
    <property type="match status" value="1"/>
</dbReference>
<dbReference type="PROSITE" id="PS00350">
    <property type="entry name" value="MADS_BOX_1"/>
    <property type="match status" value="1"/>
</dbReference>
<dbReference type="PROSITE" id="PS50066">
    <property type="entry name" value="MADS_BOX_2"/>
    <property type="match status" value="1"/>
</dbReference>
<gene>
    <name type="primary">mef2d</name>
    <name type="synonym">sl1</name>
</gene>
<organism>
    <name type="scientific">Xenopus laevis</name>
    <name type="common">African clawed frog</name>
    <dbReference type="NCBI Taxonomy" id="8355"/>
    <lineage>
        <taxon>Eukaryota</taxon>
        <taxon>Metazoa</taxon>
        <taxon>Chordata</taxon>
        <taxon>Craniata</taxon>
        <taxon>Vertebrata</taxon>
        <taxon>Euteleostomi</taxon>
        <taxon>Amphibia</taxon>
        <taxon>Batrachia</taxon>
        <taxon>Anura</taxon>
        <taxon>Pipoidea</taxon>
        <taxon>Pipidae</taxon>
        <taxon>Xenopodinae</taxon>
        <taxon>Xenopus</taxon>
        <taxon>Xenopus</taxon>
    </lineage>
</organism>
<comment type="function">
    <text>May regulate muscle-specific transcription in the embryo and may regulate transcription of a variety of cell types in the adult. It binds to the sequence 5'-CTA[TA]4TAR-3'.</text>
</comment>
<comment type="subunit">
    <text evidence="4">Binds DNA as a multimer, probably as a dimer. Interacts with hdac9.</text>
</comment>
<comment type="subcellular location">
    <subcellularLocation>
        <location>Nucleus</location>
    </subcellularLocation>
</comment>
<comment type="tissue specificity">
    <text>Restricted to the somitic mesoderm of early embryos and to the body muscle (myotomes) of the tadpole. Expressed in all tissues examined in the adult.</text>
</comment>
<comment type="developmental stage">
    <text>Expression begins in the late gastrula.</text>
</comment>
<comment type="similarity">
    <text evidence="5">Belongs to the MEF2 family.</text>
</comment>
<feature type="chain" id="PRO_0000199437" description="Myocyte-specific enhancer factor 2D homolog">
    <location>
        <begin position="1"/>
        <end position="498"/>
    </location>
</feature>
<feature type="domain" description="MADS-box" evidence="2">
    <location>
        <begin position="3"/>
        <end position="57"/>
    </location>
</feature>
<feature type="DNA-binding region" description="Mef2-type" evidence="1">
    <location>
        <begin position="58"/>
        <end position="86"/>
    </location>
</feature>
<feature type="region of interest" description="Interaction with hdac9">
    <location>
        <begin position="1"/>
        <end position="100"/>
    </location>
</feature>
<feature type="region of interest" description="Disordered" evidence="3">
    <location>
        <begin position="173"/>
        <end position="215"/>
    </location>
</feature>
<feature type="region of interest" description="Disordered" evidence="3">
    <location>
        <begin position="243"/>
        <end position="267"/>
    </location>
</feature>
<feature type="region of interest" description="Disordered" evidence="3">
    <location>
        <begin position="411"/>
        <end position="498"/>
    </location>
</feature>
<feature type="compositionally biased region" description="Basic and acidic residues" evidence="3">
    <location>
        <begin position="412"/>
        <end position="424"/>
    </location>
</feature>
<feature type="compositionally biased region" description="Polar residues" evidence="3">
    <location>
        <begin position="425"/>
        <end position="434"/>
    </location>
</feature>
<feature type="compositionally biased region" description="Polar residues" evidence="3">
    <location>
        <begin position="447"/>
        <end position="457"/>
    </location>
</feature>